<protein>
    <recommendedName>
        <fullName evidence="1">Ribosomal RNA large subunit methyltransferase H</fullName>
        <ecNumber evidence="1">2.1.1.177</ecNumber>
    </recommendedName>
    <alternativeName>
        <fullName evidence="1">23S rRNA (pseudouridine1915-N3)-methyltransferase</fullName>
    </alternativeName>
    <alternativeName>
        <fullName evidence="1">23S rRNA m3Psi1915 methyltransferase</fullName>
    </alternativeName>
    <alternativeName>
        <fullName evidence="1">rRNA (pseudouridine-N3-)-methyltransferase RlmH</fullName>
    </alternativeName>
</protein>
<comment type="function">
    <text evidence="1">Specifically methylates the pseudouridine at position 1915 (m3Psi1915) in 23S rRNA.</text>
</comment>
<comment type="catalytic activity">
    <reaction evidence="1">
        <text>pseudouridine(1915) in 23S rRNA + S-adenosyl-L-methionine = N(3)-methylpseudouridine(1915) in 23S rRNA + S-adenosyl-L-homocysteine + H(+)</text>
        <dbReference type="Rhea" id="RHEA:42752"/>
        <dbReference type="Rhea" id="RHEA-COMP:10221"/>
        <dbReference type="Rhea" id="RHEA-COMP:10222"/>
        <dbReference type="ChEBI" id="CHEBI:15378"/>
        <dbReference type="ChEBI" id="CHEBI:57856"/>
        <dbReference type="ChEBI" id="CHEBI:59789"/>
        <dbReference type="ChEBI" id="CHEBI:65314"/>
        <dbReference type="ChEBI" id="CHEBI:74486"/>
        <dbReference type="EC" id="2.1.1.177"/>
    </reaction>
</comment>
<comment type="subunit">
    <text evidence="1">Homodimer.</text>
</comment>
<comment type="subcellular location">
    <subcellularLocation>
        <location evidence="1">Cytoplasm</location>
    </subcellularLocation>
</comment>
<comment type="similarity">
    <text evidence="1">Belongs to the RNA methyltransferase RlmH family.</text>
</comment>
<name>RLMH_ANADE</name>
<gene>
    <name evidence="1" type="primary">rlmH</name>
    <name type="ordered locus">Adeh_0233</name>
</gene>
<dbReference type="EC" id="2.1.1.177" evidence="1"/>
<dbReference type="EMBL" id="CP000251">
    <property type="protein sequence ID" value="ABC80010.1"/>
    <property type="molecule type" value="Genomic_DNA"/>
</dbReference>
<dbReference type="RefSeq" id="WP_011419293.1">
    <property type="nucleotide sequence ID" value="NC_007760.1"/>
</dbReference>
<dbReference type="SMR" id="Q2IMI1"/>
<dbReference type="STRING" id="290397.Adeh_0233"/>
<dbReference type="KEGG" id="ade:Adeh_0233"/>
<dbReference type="eggNOG" id="COG1576">
    <property type="taxonomic scope" value="Bacteria"/>
</dbReference>
<dbReference type="HOGENOM" id="CLU_100552_1_0_7"/>
<dbReference type="OrthoDB" id="9806643at2"/>
<dbReference type="Proteomes" id="UP000001935">
    <property type="component" value="Chromosome"/>
</dbReference>
<dbReference type="GO" id="GO:0005737">
    <property type="term" value="C:cytoplasm"/>
    <property type="evidence" value="ECO:0007669"/>
    <property type="project" value="UniProtKB-SubCell"/>
</dbReference>
<dbReference type="GO" id="GO:0070038">
    <property type="term" value="F:rRNA (pseudouridine-N3-)-methyltransferase activity"/>
    <property type="evidence" value="ECO:0007669"/>
    <property type="project" value="UniProtKB-UniRule"/>
</dbReference>
<dbReference type="CDD" id="cd18081">
    <property type="entry name" value="RlmH-like"/>
    <property type="match status" value="1"/>
</dbReference>
<dbReference type="Gene3D" id="3.40.1280.10">
    <property type="match status" value="1"/>
</dbReference>
<dbReference type="HAMAP" id="MF_00658">
    <property type="entry name" value="23SrRNA_methyltr_H"/>
    <property type="match status" value="1"/>
</dbReference>
<dbReference type="InterPro" id="IPR029028">
    <property type="entry name" value="Alpha/beta_knot_MTases"/>
</dbReference>
<dbReference type="InterPro" id="IPR003742">
    <property type="entry name" value="RlmH-like"/>
</dbReference>
<dbReference type="InterPro" id="IPR029026">
    <property type="entry name" value="tRNA_m1G_MTases_N"/>
</dbReference>
<dbReference type="NCBIfam" id="NF000986">
    <property type="entry name" value="PRK00103.1-4"/>
    <property type="match status" value="1"/>
</dbReference>
<dbReference type="PANTHER" id="PTHR33603">
    <property type="entry name" value="METHYLTRANSFERASE"/>
    <property type="match status" value="1"/>
</dbReference>
<dbReference type="PANTHER" id="PTHR33603:SF1">
    <property type="entry name" value="RIBOSOMAL RNA LARGE SUBUNIT METHYLTRANSFERASE H"/>
    <property type="match status" value="1"/>
</dbReference>
<dbReference type="Pfam" id="PF02590">
    <property type="entry name" value="SPOUT_MTase"/>
    <property type="match status" value="1"/>
</dbReference>
<dbReference type="PIRSF" id="PIRSF004505">
    <property type="entry name" value="MT_bac"/>
    <property type="match status" value="1"/>
</dbReference>
<dbReference type="SUPFAM" id="SSF75217">
    <property type="entry name" value="alpha/beta knot"/>
    <property type="match status" value="1"/>
</dbReference>
<proteinExistence type="inferred from homology"/>
<reference key="1">
    <citation type="submission" date="2006-01" db="EMBL/GenBank/DDBJ databases">
        <title>Complete sequence of Anaeromyxobacter dehalogenans 2CP-C.</title>
        <authorList>
            <person name="Copeland A."/>
            <person name="Lucas S."/>
            <person name="Lapidus A."/>
            <person name="Barry K."/>
            <person name="Detter J.C."/>
            <person name="Glavina T."/>
            <person name="Hammon N."/>
            <person name="Israni S."/>
            <person name="Pitluck S."/>
            <person name="Brettin T."/>
            <person name="Bruce D."/>
            <person name="Han C."/>
            <person name="Tapia R."/>
            <person name="Gilna P."/>
            <person name="Kiss H."/>
            <person name="Schmutz J."/>
            <person name="Larimer F."/>
            <person name="Land M."/>
            <person name="Kyrpides N."/>
            <person name="Anderson I."/>
            <person name="Sanford R.A."/>
            <person name="Ritalahti K.M."/>
            <person name="Thomas H.S."/>
            <person name="Kirby J.R."/>
            <person name="Zhulin I.B."/>
            <person name="Loeffler F.E."/>
            <person name="Richardson P."/>
        </authorList>
    </citation>
    <scope>NUCLEOTIDE SEQUENCE [LARGE SCALE GENOMIC DNA]</scope>
    <source>
        <strain>2CP-C</strain>
    </source>
</reference>
<feature type="chain" id="PRO_0000260535" description="Ribosomal RNA large subunit methyltransferase H">
    <location>
        <begin position="1"/>
        <end position="153"/>
    </location>
</feature>
<feature type="binding site" evidence="1">
    <location>
        <position position="71"/>
    </location>
    <ligand>
        <name>S-adenosyl-L-methionine</name>
        <dbReference type="ChEBI" id="CHEBI:59789"/>
    </ligand>
</feature>
<feature type="binding site" evidence="1">
    <location>
        <position position="102"/>
    </location>
    <ligand>
        <name>S-adenosyl-L-methionine</name>
        <dbReference type="ChEBI" id="CHEBI:59789"/>
    </ligand>
</feature>
<keyword id="KW-0963">Cytoplasm</keyword>
<keyword id="KW-0489">Methyltransferase</keyword>
<keyword id="KW-1185">Reference proteome</keyword>
<keyword id="KW-0698">rRNA processing</keyword>
<keyword id="KW-0949">S-adenosyl-L-methionine</keyword>
<keyword id="KW-0808">Transferase</keyword>
<organism>
    <name type="scientific">Anaeromyxobacter dehalogenans (strain 2CP-C)</name>
    <dbReference type="NCBI Taxonomy" id="290397"/>
    <lineage>
        <taxon>Bacteria</taxon>
        <taxon>Pseudomonadati</taxon>
        <taxon>Myxococcota</taxon>
        <taxon>Myxococcia</taxon>
        <taxon>Myxococcales</taxon>
        <taxon>Cystobacterineae</taxon>
        <taxon>Anaeromyxobacteraceae</taxon>
        <taxon>Anaeromyxobacter</taxon>
    </lineage>
</organism>
<sequence>MKIRVVAVGRDRSGLYAPAVDEYAKRLGRYLRFELVEVPEARKLAGTPGAKGEEGAALLAKLGPRERVVVLDERGDELTSVAFAERVRRWMERGQDVALLIGGSDGLAPEVLARAEERLAVSRFTLAHRLARLVLVEQLYRAMTILRGEPYHK</sequence>
<evidence type="ECO:0000255" key="1">
    <source>
        <dbReference type="HAMAP-Rule" id="MF_00658"/>
    </source>
</evidence>
<accession>Q2IMI1</accession>